<evidence type="ECO:0000250" key="1">
    <source>
        <dbReference type="UniProtKB" id="Q9NPE2"/>
    </source>
</evidence>
<evidence type="ECO:0000255" key="2"/>
<evidence type="ECO:0000256" key="3">
    <source>
        <dbReference type="SAM" id="MobiDB-lite"/>
    </source>
</evidence>
<evidence type="ECO:0000305" key="4"/>
<dbReference type="EMBL" id="CR787252">
    <property type="status" value="NOT_ANNOTATED_CDS"/>
    <property type="molecule type" value="mRNA"/>
</dbReference>
<dbReference type="EMBL" id="CR860171">
    <property type="protein sequence ID" value="CAH92313.1"/>
    <property type="status" value="ALT_INIT"/>
    <property type="molecule type" value="mRNA"/>
</dbReference>
<dbReference type="RefSeq" id="NP_001126356.1">
    <property type="nucleotide sequence ID" value="NM_001132884.1"/>
</dbReference>
<dbReference type="SMR" id="Q5R7E7"/>
<dbReference type="FunCoup" id="Q5R7E7">
    <property type="interactions" value="1378"/>
</dbReference>
<dbReference type="STRING" id="9601.ENSPPYP00000007688"/>
<dbReference type="GlyCosmos" id="Q5R7E7">
    <property type="glycosylation" value="1 site, No reported glycans"/>
</dbReference>
<dbReference type="GeneID" id="100173337"/>
<dbReference type="KEGG" id="pon:100173337"/>
<dbReference type="CTD" id="51335"/>
<dbReference type="eggNOG" id="ENOG502S5A6">
    <property type="taxonomic scope" value="Eukaryota"/>
</dbReference>
<dbReference type="InParanoid" id="Q5R7E7"/>
<dbReference type="OrthoDB" id="6415470at2759"/>
<dbReference type="Proteomes" id="UP000001595">
    <property type="component" value="Unplaced"/>
</dbReference>
<dbReference type="GO" id="GO:0005576">
    <property type="term" value="C:extracellular region"/>
    <property type="evidence" value="ECO:0007669"/>
    <property type="project" value="UniProtKB-SubCell"/>
</dbReference>
<dbReference type="GO" id="GO:0031966">
    <property type="term" value="C:mitochondrial membrane"/>
    <property type="evidence" value="ECO:0000250"/>
    <property type="project" value="UniProtKB"/>
</dbReference>
<dbReference type="GO" id="GO:0005634">
    <property type="term" value="C:nucleus"/>
    <property type="evidence" value="ECO:0007669"/>
    <property type="project" value="UniProtKB-SubCell"/>
</dbReference>
<dbReference type="GO" id="GO:0019843">
    <property type="term" value="F:rRNA binding"/>
    <property type="evidence" value="ECO:0000250"/>
    <property type="project" value="UniProtKB"/>
</dbReference>
<dbReference type="GO" id="GO:0030154">
    <property type="term" value="P:cell differentiation"/>
    <property type="evidence" value="ECO:0007669"/>
    <property type="project" value="UniProtKB-KW"/>
</dbReference>
<dbReference type="GO" id="GO:0061668">
    <property type="term" value="P:mitochondrial ribosome assembly"/>
    <property type="evidence" value="ECO:0000250"/>
    <property type="project" value="UniProtKB"/>
</dbReference>
<dbReference type="GO" id="GO:0070131">
    <property type="term" value="P:positive regulation of mitochondrial translation"/>
    <property type="evidence" value="ECO:0000250"/>
    <property type="project" value="UniProtKB"/>
</dbReference>
<dbReference type="InterPro" id="IPR010487">
    <property type="entry name" value="NGRN/Rrg9"/>
</dbReference>
<dbReference type="PANTHER" id="PTHR13475">
    <property type="entry name" value="NEUGRIN"/>
    <property type="match status" value="1"/>
</dbReference>
<dbReference type="PANTHER" id="PTHR13475:SF4">
    <property type="entry name" value="NEUGRIN"/>
    <property type="match status" value="1"/>
</dbReference>
<dbReference type="Pfam" id="PF06413">
    <property type="entry name" value="Neugrin"/>
    <property type="match status" value="1"/>
</dbReference>
<gene>
    <name type="primary">NGRN</name>
</gene>
<organism>
    <name type="scientific">Pongo abelii</name>
    <name type="common">Sumatran orangutan</name>
    <name type="synonym">Pongo pygmaeus abelii</name>
    <dbReference type="NCBI Taxonomy" id="9601"/>
    <lineage>
        <taxon>Eukaryota</taxon>
        <taxon>Metazoa</taxon>
        <taxon>Chordata</taxon>
        <taxon>Craniata</taxon>
        <taxon>Vertebrata</taxon>
        <taxon>Euteleostomi</taxon>
        <taxon>Mammalia</taxon>
        <taxon>Eutheria</taxon>
        <taxon>Euarchontoglires</taxon>
        <taxon>Primates</taxon>
        <taxon>Haplorrhini</taxon>
        <taxon>Catarrhini</taxon>
        <taxon>Hominidae</taxon>
        <taxon>Pongo</taxon>
    </lineage>
</organism>
<name>NGRN_PONAB</name>
<reference key="1">
    <citation type="submission" date="2004-11" db="EMBL/GenBank/DDBJ databases">
        <authorList>
            <consortium name="The German cDNA consortium"/>
        </authorList>
    </citation>
    <scope>NUCLEOTIDE SEQUENCE [LARGE SCALE MRNA]</scope>
    <source>
        <tissue>Kidney</tissue>
    </source>
</reference>
<sequence>MAVTLSLLLSGRVCAAVARCGFATRGVADPGPIGREPDPDSDWEPEERELQEVKSTLKRQKKAIRFQKIRRQMEASGAPPRTLTWEAMEQIRYLHEEFPESWSVPRLAEGFDVSTDVIRRVLKSKFLPTLEQKLKQDQKVLKKAGLAPLLQQLRGSGNTSKLLPAGHSVSGSLLMPGHEASSKDPNHSTALKVIESDTHRTNTPRRWKGRNKEIQDLEESFVPVAAPLGHPRELQKYSSDSESPRRTGNGALPSDQKLEELKAEEPGNFSSKVVQRGREFFDSNGNFLYRI</sequence>
<protein>
    <recommendedName>
        <fullName>Neugrin</fullName>
    </recommendedName>
    <alternativeName>
        <fullName>Neurite outgrowth-associated protein</fullName>
    </alternativeName>
</protein>
<keyword id="KW-0217">Developmental protein</keyword>
<keyword id="KW-0221">Differentiation</keyword>
<keyword id="KW-0325">Glycoprotein</keyword>
<keyword id="KW-0472">Membrane</keyword>
<keyword id="KW-0496">Mitochondrion</keyword>
<keyword id="KW-0539">Nucleus</keyword>
<keyword id="KW-0597">Phosphoprotein</keyword>
<keyword id="KW-1185">Reference proteome</keyword>
<keyword id="KW-0964">Secreted</keyword>
<keyword id="KW-0732">Signal</keyword>
<accession>Q5R7E7</accession>
<feature type="signal peptide" evidence="2">
    <location>
        <begin position="1"/>
        <end position="15"/>
    </location>
</feature>
<feature type="chain" id="PRO_0000294485" description="Neugrin">
    <location>
        <begin position="16"/>
        <end position="291"/>
    </location>
</feature>
<feature type="region of interest" description="Disordered" evidence="3">
    <location>
        <begin position="27"/>
        <end position="49"/>
    </location>
</feature>
<feature type="region of interest" description="Disordered" evidence="3">
    <location>
        <begin position="224"/>
        <end position="270"/>
    </location>
</feature>
<feature type="compositionally biased region" description="Acidic residues" evidence="3">
    <location>
        <begin position="39"/>
        <end position="49"/>
    </location>
</feature>
<feature type="compositionally biased region" description="Basic and acidic residues" evidence="3">
    <location>
        <begin position="256"/>
        <end position="265"/>
    </location>
</feature>
<feature type="modified residue" description="Phosphoserine" evidence="1">
    <location>
        <position position="41"/>
    </location>
</feature>
<feature type="glycosylation site" description="N-linked (GlcNAc...) asparagine" evidence="2">
    <location>
        <position position="158"/>
    </location>
</feature>
<proteinExistence type="evidence at transcript level"/>
<comment type="function">
    <text evidence="1">Plays an essential role in mitochondrial ribosome biogenesis. As a component of a functional protein-RNA module, consisting of RCC1L, NGRN, RPUSD3, RPUSD4, TRUB2, FASTKD2 and 16S mitochondrial ribosomal RNA (16S mt-rRNA), controls 16S mt-rRNA abundance and is required for intra-mitochondrial translation of core subunits of the oxidative phosphorylation system.</text>
</comment>
<comment type="subunit">
    <text evidence="1">Forms a regulatory protein-RNA complex, consisting of RCC1L, NGRN, RPUSD3, RPUSD4, TRUB2, FASTKD2 and 16S mt-rRNA. Interacts with 16S mt-rRNA; this interaction is direct.</text>
</comment>
<comment type="subcellular location">
    <subcellularLocation>
        <location evidence="1">Nucleus</location>
    </subcellularLocation>
    <subcellularLocation>
        <location evidence="1">Secreted</location>
    </subcellularLocation>
    <subcellularLocation>
        <location evidence="1">Mitochondrion membrane</location>
    </subcellularLocation>
</comment>
<comment type="similarity">
    <text evidence="4">Belongs to the neugrin family.</text>
</comment>
<comment type="sequence caution" evidence="4">
    <conflict type="erroneous initiation">
        <sequence resource="EMBL-CDS" id="CAH92313"/>
    </conflict>
    <text>Truncated N-terminus.</text>
</comment>